<reference key="1">
    <citation type="journal article" date="2009" name="Genome Biol.">
        <title>Genomic and genetic analyses of diversity and plant interactions of Pseudomonas fluorescens.</title>
        <authorList>
            <person name="Silby M.W."/>
            <person name="Cerdeno-Tarraga A.M."/>
            <person name="Vernikos G.S."/>
            <person name="Giddens S.R."/>
            <person name="Jackson R.W."/>
            <person name="Preston G.M."/>
            <person name="Zhang X.-X."/>
            <person name="Moon C.D."/>
            <person name="Gehrig S.M."/>
            <person name="Godfrey S.A.C."/>
            <person name="Knight C.G."/>
            <person name="Malone J.G."/>
            <person name="Robinson Z."/>
            <person name="Spiers A.J."/>
            <person name="Harris S."/>
            <person name="Challis G.L."/>
            <person name="Yaxley A.M."/>
            <person name="Harris D."/>
            <person name="Seeger K."/>
            <person name="Murphy L."/>
            <person name="Rutter S."/>
            <person name="Squares R."/>
            <person name="Quail M.A."/>
            <person name="Saunders E."/>
            <person name="Mavromatis K."/>
            <person name="Brettin T.S."/>
            <person name="Bentley S.D."/>
            <person name="Hothersall J."/>
            <person name="Stephens E."/>
            <person name="Thomas C.M."/>
            <person name="Parkhill J."/>
            <person name="Levy S.B."/>
            <person name="Rainey P.B."/>
            <person name="Thomson N.R."/>
        </authorList>
    </citation>
    <scope>NUCLEOTIDE SEQUENCE [LARGE SCALE GENOMIC DNA]</scope>
    <source>
        <strain>Pf0-1</strain>
    </source>
</reference>
<feature type="chain" id="PRO_0000303111" description="Malonate decarboxylase acyl carrier protein">
    <location>
        <begin position="1"/>
        <end position="99"/>
    </location>
</feature>
<feature type="modified residue" description="O-(phosphoribosyl dephospho-coenzyme A)serine" evidence="1">
    <location>
        <position position="25"/>
    </location>
</feature>
<proteinExistence type="inferred from homology"/>
<keyword id="KW-0963">Cytoplasm</keyword>
<keyword id="KW-0597">Phosphoprotein</keyword>
<evidence type="ECO:0000255" key="1">
    <source>
        <dbReference type="HAMAP-Rule" id="MF_00710"/>
    </source>
</evidence>
<sequence length="99" mass="10702">METLSFEFPAGQPPRGRALVGCVGSGDLEVLIEPGLAGRLTINVQTSVNGAEQRWQHLFARMFDGTTPPAMAIDIHDFGATPGVVRLRLEQGFEEIGHD</sequence>
<protein>
    <recommendedName>
        <fullName evidence="1">Malonate decarboxylase acyl carrier protein</fullName>
    </recommendedName>
    <alternativeName>
        <fullName evidence="1">Malonate decarboxylase subunit delta</fullName>
    </alternativeName>
</protein>
<accession>Q3K5B7</accession>
<gene>
    <name evidence="1" type="primary">mdcC</name>
    <name type="ordered locus">Pfl01_5300</name>
</gene>
<organism>
    <name type="scientific">Pseudomonas fluorescens (strain Pf0-1)</name>
    <dbReference type="NCBI Taxonomy" id="205922"/>
    <lineage>
        <taxon>Bacteria</taxon>
        <taxon>Pseudomonadati</taxon>
        <taxon>Pseudomonadota</taxon>
        <taxon>Gammaproteobacteria</taxon>
        <taxon>Pseudomonadales</taxon>
        <taxon>Pseudomonadaceae</taxon>
        <taxon>Pseudomonas</taxon>
    </lineage>
</organism>
<dbReference type="EMBL" id="CP000094">
    <property type="protein sequence ID" value="ABA77037.1"/>
    <property type="molecule type" value="Genomic_DNA"/>
</dbReference>
<dbReference type="RefSeq" id="WP_011336358.1">
    <property type="nucleotide sequence ID" value="NC_007492.2"/>
</dbReference>
<dbReference type="SMR" id="Q3K5B7"/>
<dbReference type="KEGG" id="pfo:Pfl01_5300"/>
<dbReference type="eggNOG" id="COG3052">
    <property type="taxonomic scope" value="Bacteria"/>
</dbReference>
<dbReference type="HOGENOM" id="CLU_173135_1_0_6"/>
<dbReference type="Proteomes" id="UP000002704">
    <property type="component" value="Chromosome"/>
</dbReference>
<dbReference type="GO" id="GO:0005737">
    <property type="term" value="C:cytoplasm"/>
    <property type="evidence" value="ECO:0007669"/>
    <property type="project" value="UniProtKB-SubCell"/>
</dbReference>
<dbReference type="GO" id="GO:0000036">
    <property type="term" value="F:acyl carrier activity"/>
    <property type="evidence" value="ECO:0007669"/>
    <property type="project" value="UniProtKB-UniRule"/>
</dbReference>
<dbReference type="HAMAP" id="MF_00710">
    <property type="entry name" value="Malonate_deCO2ase_dsu"/>
    <property type="match status" value="1"/>
</dbReference>
<dbReference type="InterPro" id="IPR023439">
    <property type="entry name" value="Mal_deCO2ase/Cit_lyase_ACP"/>
</dbReference>
<dbReference type="InterPro" id="IPR009662">
    <property type="entry name" value="Malonate_deCO2ase_dsu"/>
</dbReference>
<dbReference type="NCBIfam" id="TIGR03130">
    <property type="entry name" value="malonate_delta"/>
    <property type="match status" value="1"/>
</dbReference>
<dbReference type="NCBIfam" id="NF002293">
    <property type="entry name" value="PRK01220.1"/>
    <property type="match status" value="1"/>
</dbReference>
<dbReference type="Pfam" id="PF06857">
    <property type="entry name" value="ACP"/>
    <property type="match status" value="1"/>
</dbReference>
<name>MDCC_PSEPF</name>
<comment type="function">
    <text evidence="1">Subunit of malonate decarboxylase, it is an acyl carrier protein to which acetyl and malonyl thioester residues are bound via a 2'-(5''-phosphoribosyl)-3'-dephospho-CoA prosthetic group and turn over during the catalytic mechanism.</text>
</comment>
<comment type="subcellular location">
    <subcellularLocation>
        <location evidence="1">Cytoplasm</location>
    </subcellularLocation>
</comment>
<comment type="PTM">
    <text evidence="1">Covalently binds the prosthetic group of malonate decarboxylase.</text>
</comment>
<comment type="similarity">
    <text evidence="1">Belongs to the MdcC family.</text>
</comment>